<comment type="function">
    <text evidence="1">Part of the ABC transporter complex RbsABC involved in ribose import. Responsible for energy coupling to the transport system.</text>
</comment>
<comment type="catalytic activity">
    <reaction evidence="1">
        <text>D-ribose(out) + ATP + H2O = D-ribose(in) + ADP + phosphate + H(+)</text>
        <dbReference type="Rhea" id="RHEA:29903"/>
        <dbReference type="ChEBI" id="CHEBI:15377"/>
        <dbReference type="ChEBI" id="CHEBI:15378"/>
        <dbReference type="ChEBI" id="CHEBI:30616"/>
        <dbReference type="ChEBI" id="CHEBI:43474"/>
        <dbReference type="ChEBI" id="CHEBI:47013"/>
        <dbReference type="ChEBI" id="CHEBI:456216"/>
        <dbReference type="EC" id="7.5.2.7"/>
    </reaction>
</comment>
<comment type="subunit">
    <text evidence="1">The complex is composed of an ATP-binding protein (RbsA), two transmembrane proteins (RbsC) and a solute-binding protein (RbsB).</text>
</comment>
<comment type="subcellular location">
    <subcellularLocation>
        <location evidence="1">Cell inner membrane</location>
        <topology evidence="1">Peripheral membrane protein</topology>
    </subcellularLocation>
</comment>
<comment type="similarity">
    <text evidence="1">Belongs to the ABC transporter superfamily. Ribose importer (TC 3.A.1.2.1) family.</text>
</comment>
<proteinExistence type="inferred from homology"/>
<evidence type="ECO:0000255" key="1">
    <source>
        <dbReference type="HAMAP-Rule" id="MF_01716"/>
    </source>
</evidence>
<name>RBSA_ECOL6</name>
<gene>
    <name evidence="1" type="primary">rbsA</name>
    <name type="ordered locus">c4677</name>
</gene>
<feature type="chain" id="PRO_0000261066" description="Ribose import ATP-binding protein RbsA">
    <location>
        <begin position="1"/>
        <end position="501"/>
    </location>
</feature>
<feature type="domain" description="ABC transporter 1" evidence="1">
    <location>
        <begin position="5"/>
        <end position="241"/>
    </location>
</feature>
<feature type="domain" description="ABC transporter 2" evidence="1">
    <location>
        <begin position="252"/>
        <end position="495"/>
    </location>
</feature>
<feature type="binding site" evidence="1">
    <location>
        <begin position="37"/>
        <end position="44"/>
    </location>
    <ligand>
        <name>ATP</name>
        <dbReference type="ChEBI" id="CHEBI:30616"/>
    </ligand>
</feature>
<reference key="1">
    <citation type="journal article" date="2002" name="Proc. Natl. Acad. Sci. U.S.A.">
        <title>Extensive mosaic structure revealed by the complete genome sequence of uropathogenic Escherichia coli.</title>
        <authorList>
            <person name="Welch R.A."/>
            <person name="Burland V."/>
            <person name="Plunkett G. III"/>
            <person name="Redford P."/>
            <person name="Roesch P."/>
            <person name="Rasko D."/>
            <person name="Buckles E.L."/>
            <person name="Liou S.-R."/>
            <person name="Boutin A."/>
            <person name="Hackett J."/>
            <person name="Stroud D."/>
            <person name="Mayhew G.F."/>
            <person name="Rose D.J."/>
            <person name="Zhou S."/>
            <person name="Schwartz D.C."/>
            <person name="Perna N.T."/>
            <person name="Mobley H.L.T."/>
            <person name="Donnenberg M.S."/>
            <person name="Blattner F.R."/>
        </authorList>
    </citation>
    <scope>NUCLEOTIDE SEQUENCE [LARGE SCALE GENOMIC DNA]</scope>
    <source>
        <strain>CFT073 / ATCC 700928 / UPEC</strain>
    </source>
</reference>
<protein>
    <recommendedName>
        <fullName evidence="1">Ribose import ATP-binding protein RbsA</fullName>
        <ecNumber evidence="1">7.5.2.7</ecNumber>
    </recommendedName>
</protein>
<accession>Q8FBS3</accession>
<sequence length="501" mass="55068">MEALLQLKGIDKAFPGVKALSGAALNVYPGRVMALVGENGAGKSTMMKVLTGIYTRDAGTLLWLGKETTFTGPKSSQEAGIGIIHQELNLIPQLTIAENIFLGREFVNRFGKIDWKTMYAEADKLLAKLNLRFKSDKLVGDLSIGDQQMVEIAKVLSFESKVIIMDEPTDALTDTETESLFRVIRELKLQGRGIVYISHRMKEIFEICDDVTVFRDGQFIAEREVASLTEDSLIEMMVGRKLEDQYPHLDKAPGDIRLKVDNLCGPGVNDVSFTLRKGEILGVSGLMGAGRTELMKVLYGALPRTSGYVTLDGHEVVTRSPQDGLANGIVYISEDRKRDGLVLGMSVKENMSLTALRYFSRAGGSLKHADEQQAVSDFIRLFNVKTPSMEQAIGLLSGGNQQKVAIARGLMTRPKVLILDEPTRGVDVGAKKEIYQLINQFKADGLSIILVSSEMPEVLGMSDRIIVMHEGHLSGEFTREQATQEVLMAAAVGKLNRVNQE</sequence>
<keyword id="KW-0067">ATP-binding</keyword>
<keyword id="KW-0997">Cell inner membrane</keyword>
<keyword id="KW-1003">Cell membrane</keyword>
<keyword id="KW-0472">Membrane</keyword>
<keyword id="KW-0547">Nucleotide-binding</keyword>
<keyword id="KW-1185">Reference proteome</keyword>
<keyword id="KW-0677">Repeat</keyword>
<keyword id="KW-0762">Sugar transport</keyword>
<keyword id="KW-1278">Translocase</keyword>
<keyword id="KW-0813">Transport</keyword>
<dbReference type="EC" id="7.5.2.7" evidence="1"/>
<dbReference type="EMBL" id="AE014075">
    <property type="protein sequence ID" value="AAN83109.1"/>
    <property type="molecule type" value="Genomic_DNA"/>
</dbReference>
<dbReference type="RefSeq" id="WP_000387762.1">
    <property type="nucleotide sequence ID" value="NZ_CP051263.1"/>
</dbReference>
<dbReference type="SMR" id="Q8FBS3"/>
<dbReference type="STRING" id="199310.c4677"/>
<dbReference type="DNASU" id="1040415"/>
<dbReference type="KEGG" id="ecc:c4677"/>
<dbReference type="eggNOG" id="COG1129">
    <property type="taxonomic scope" value="Bacteria"/>
</dbReference>
<dbReference type="HOGENOM" id="CLU_000604_92_3_6"/>
<dbReference type="BioCyc" id="ECOL199310:C4677-MONOMER"/>
<dbReference type="Proteomes" id="UP000001410">
    <property type="component" value="Chromosome"/>
</dbReference>
<dbReference type="GO" id="GO:0005886">
    <property type="term" value="C:plasma membrane"/>
    <property type="evidence" value="ECO:0007669"/>
    <property type="project" value="UniProtKB-SubCell"/>
</dbReference>
<dbReference type="GO" id="GO:0015611">
    <property type="term" value="F:ABC-type D-ribose transporter activity"/>
    <property type="evidence" value="ECO:0007669"/>
    <property type="project" value="UniProtKB-EC"/>
</dbReference>
<dbReference type="GO" id="GO:0005524">
    <property type="term" value="F:ATP binding"/>
    <property type="evidence" value="ECO:0007669"/>
    <property type="project" value="UniProtKB-KW"/>
</dbReference>
<dbReference type="GO" id="GO:0016887">
    <property type="term" value="F:ATP hydrolysis activity"/>
    <property type="evidence" value="ECO:0007669"/>
    <property type="project" value="InterPro"/>
</dbReference>
<dbReference type="CDD" id="cd03216">
    <property type="entry name" value="ABC_Carb_Monos_I"/>
    <property type="match status" value="1"/>
</dbReference>
<dbReference type="CDD" id="cd03215">
    <property type="entry name" value="ABC_Carb_Monos_II"/>
    <property type="match status" value="1"/>
</dbReference>
<dbReference type="FunFam" id="3.40.50.300:FF:000126">
    <property type="entry name" value="Galactose/methyl galactoside import ATP-binding protein MglA"/>
    <property type="match status" value="1"/>
</dbReference>
<dbReference type="FunFam" id="3.40.50.300:FF:000127">
    <property type="entry name" value="Ribose import ATP-binding protein RbsA"/>
    <property type="match status" value="1"/>
</dbReference>
<dbReference type="Gene3D" id="3.40.50.300">
    <property type="entry name" value="P-loop containing nucleotide triphosphate hydrolases"/>
    <property type="match status" value="2"/>
</dbReference>
<dbReference type="InterPro" id="IPR003593">
    <property type="entry name" value="AAA+_ATPase"/>
</dbReference>
<dbReference type="InterPro" id="IPR050107">
    <property type="entry name" value="ABC_carbohydrate_import_ATPase"/>
</dbReference>
<dbReference type="InterPro" id="IPR003439">
    <property type="entry name" value="ABC_transporter-like_ATP-bd"/>
</dbReference>
<dbReference type="InterPro" id="IPR017871">
    <property type="entry name" value="ABC_transporter-like_CS"/>
</dbReference>
<dbReference type="InterPro" id="IPR027417">
    <property type="entry name" value="P-loop_NTPase"/>
</dbReference>
<dbReference type="NCBIfam" id="NF008030">
    <property type="entry name" value="PRK10762.1"/>
    <property type="match status" value="1"/>
</dbReference>
<dbReference type="PANTHER" id="PTHR43790">
    <property type="entry name" value="CARBOHYDRATE TRANSPORT ATP-BINDING PROTEIN MG119-RELATED"/>
    <property type="match status" value="1"/>
</dbReference>
<dbReference type="PANTHER" id="PTHR43790:SF3">
    <property type="entry name" value="D-ALLOSE IMPORT ATP-BINDING PROTEIN ALSA-RELATED"/>
    <property type="match status" value="1"/>
</dbReference>
<dbReference type="Pfam" id="PF00005">
    <property type="entry name" value="ABC_tran"/>
    <property type="match status" value="2"/>
</dbReference>
<dbReference type="SMART" id="SM00382">
    <property type="entry name" value="AAA"/>
    <property type="match status" value="2"/>
</dbReference>
<dbReference type="SUPFAM" id="SSF52540">
    <property type="entry name" value="P-loop containing nucleoside triphosphate hydrolases"/>
    <property type="match status" value="2"/>
</dbReference>
<dbReference type="PROSITE" id="PS00211">
    <property type="entry name" value="ABC_TRANSPORTER_1"/>
    <property type="match status" value="1"/>
</dbReference>
<dbReference type="PROSITE" id="PS50893">
    <property type="entry name" value="ABC_TRANSPORTER_2"/>
    <property type="match status" value="1"/>
</dbReference>
<dbReference type="PROSITE" id="PS51254">
    <property type="entry name" value="RBSA"/>
    <property type="match status" value="1"/>
</dbReference>
<organism>
    <name type="scientific">Escherichia coli O6:H1 (strain CFT073 / ATCC 700928 / UPEC)</name>
    <dbReference type="NCBI Taxonomy" id="199310"/>
    <lineage>
        <taxon>Bacteria</taxon>
        <taxon>Pseudomonadati</taxon>
        <taxon>Pseudomonadota</taxon>
        <taxon>Gammaproteobacteria</taxon>
        <taxon>Enterobacterales</taxon>
        <taxon>Enterobacteriaceae</taxon>
        <taxon>Escherichia</taxon>
    </lineage>
</organism>